<protein>
    <recommendedName>
        <fullName evidence="1">Acetyl-coenzyme A synthetase</fullName>
        <shortName evidence="1">AcCoA synthetase</shortName>
        <shortName evidence="1">Acs</shortName>
        <ecNumber evidence="1">6.2.1.1</ecNumber>
    </recommendedName>
    <alternativeName>
        <fullName evidence="1">Acetate--CoA ligase</fullName>
    </alternativeName>
    <alternativeName>
        <fullName evidence="1">Acyl-activating enzyme</fullName>
    </alternativeName>
</protein>
<organism>
    <name type="scientific">Bartonella henselae (strain ATCC 49882 / DSM 28221 / CCUG 30454 / Houston 1)</name>
    <name type="common">Rochalimaea henselae</name>
    <dbReference type="NCBI Taxonomy" id="283166"/>
    <lineage>
        <taxon>Bacteria</taxon>
        <taxon>Pseudomonadati</taxon>
        <taxon>Pseudomonadota</taxon>
        <taxon>Alphaproteobacteria</taxon>
        <taxon>Hyphomicrobiales</taxon>
        <taxon>Bartonellaceae</taxon>
        <taxon>Bartonella</taxon>
    </lineage>
</organism>
<proteinExistence type="inferred from homology"/>
<feature type="chain" id="PRO_1000065270" description="Acetyl-coenzyme A synthetase">
    <location>
        <begin position="1"/>
        <end position="652"/>
    </location>
</feature>
<feature type="binding site" evidence="1">
    <location>
        <begin position="189"/>
        <end position="192"/>
    </location>
    <ligand>
        <name>CoA</name>
        <dbReference type="ChEBI" id="CHEBI:57287"/>
    </ligand>
</feature>
<feature type="binding site" evidence="1">
    <location>
        <position position="311"/>
    </location>
    <ligand>
        <name>CoA</name>
        <dbReference type="ChEBI" id="CHEBI:57287"/>
    </ligand>
</feature>
<feature type="binding site" evidence="1">
    <location>
        <begin position="387"/>
        <end position="389"/>
    </location>
    <ligand>
        <name>ATP</name>
        <dbReference type="ChEBI" id="CHEBI:30616"/>
    </ligand>
</feature>
<feature type="binding site" evidence="1">
    <location>
        <begin position="411"/>
        <end position="416"/>
    </location>
    <ligand>
        <name>ATP</name>
        <dbReference type="ChEBI" id="CHEBI:30616"/>
    </ligand>
</feature>
<feature type="binding site" evidence="1">
    <location>
        <position position="500"/>
    </location>
    <ligand>
        <name>ATP</name>
        <dbReference type="ChEBI" id="CHEBI:30616"/>
    </ligand>
</feature>
<feature type="binding site" evidence="1">
    <location>
        <position position="515"/>
    </location>
    <ligand>
        <name>ATP</name>
        <dbReference type="ChEBI" id="CHEBI:30616"/>
    </ligand>
</feature>
<feature type="binding site" evidence="1">
    <location>
        <position position="523"/>
    </location>
    <ligand>
        <name>CoA</name>
        <dbReference type="ChEBI" id="CHEBI:57287"/>
    </ligand>
</feature>
<feature type="binding site" evidence="1">
    <location>
        <position position="526"/>
    </location>
    <ligand>
        <name>ATP</name>
        <dbReference type="ChEBI" id="CHEBI:30616"/>
    </ligand>
</feature>
<feature type="binding site" evidence="1">
    <location>
        <position position="537"/>
    </location>
    <ligand>
        <name>Mg(2+)</name>
        <dbReference type="ChEBI" id="CHEBI:18420"/>
    </ligand>
</feature>
<feature type="binding site" evidence="1">
    <location>
        <position position="539"/>
    </location>
    <ligand>
        <name>Mg(2+)</name>
        <dbReference type="ChEBI" id="CHEBI:18420"/>
    </ligand>
</feature>
<feature type="binding site" evidence="1">
    <location>
        <position position="542"/>
    </location>
    <ligand>
        <name>Mg(2+)</name>
        <dbReference type="ChEBI" id="CHEBI:18420"/>
    </ligand>
</feature>
<feature type="binding site">
    <location>
        <position position="584"/>
    </location>
    <ligand>
        <name>CoA</name>
        <dbReference type="ChEBI" id="CHEBI:57287"/>
    </ligand>
</feature>
<feature type="modified residue" description="N6-acetyllysine" evidence="1">
    <location>
        <position position="609"/>
    </location>
</feature>
<reference key="1">
    <citation type="journal article" date="2004" name="Proc. Natl. Acad. Sci. U.S.A.">
        <title>The louse-borne human pathogen Bartonella quintana is a genomic derivative of the zoonotic agent Bartonella henselae.</title>
        <authorList>
            <person name="Alsmark U.C.M."/>
            <person name="Frank A.C."/>
            <person name="Karlberg E.O."/>
            <person name="Legault B.-A."/>
            <person name="Ardell D.H."/>
            <person name="Canbaeck B."/>
            <person name="Eriksson A.-S."/>
            <person name="Naeslund A.K."/>
            <person name="Handley S.A."/>
            <person name="Huvet M."/>
            <person name="La Scola B."/>
            <person name="Holmberg M."/>
            <person name="Andersson S.G.E."/>
        </authorList>
    </citation>
    <scope>NUCLEOTIDE SEQUENCE [LARGE SCALE GENOMIC DNA]</scope>
    <source>
        <strain>ATCC 49882 / DSM 28221 / CCUG 30454 / Houston 1</strain>
    </source>
</reference>
<gene>
    <name evidence="1" type="primary">acsA</name>
    <name type="ordered locus">BH15410</name>
</gene>
<keyword id="KW-0007">Acetylation</keyword>
<keyword id="KW-0067">ATP-binding</keyword>
<keyword id="KW-0436">Ligase</keyword>
<keyword id="KW-0460">Magnesium</keyword>
<keyword id="KW-0479">Metal-binding</keyword>
<keyword id="KW-0547">Nucleotide-binding</keyword>
<accession>Q6G1W0</accession>
<name>ACSA_BARHE</name>
<comment type="function">
    <text evidence="1">Catalyzes the conversion of acetate into acetyl-CoA (AcCoA), an essential intermediate at the junction of anabolic and catabolic pathways. AcsA undergoes a two-step reaction. In the first half reaction, AcsA combines acetate with ATP to form acetyl-adenylate (AcAMP) intermediate. In the second half reaction, it can then transfer the acetyl group from AcAMP to the sulfhydryl group of CoA, forming the product AcCoA.</text>
</comment>
<comment type="catalytic activity">
    <reaction evidence="1">
        <text>acetate + ATP + CoA = acetyl-CoA + AMP + diphosphate</text>
        <dbReference type="Rhea" id="RHEA:23176"/>
        <dbReference type="ChEBI" id="CHEBI:30089"/>
        <dbReference type="ChEBI" id="CHEBI:30616"/>
        <dbReference type="ChEBI" id="CHEBI:33019"/>
        <dbReference type="ChEBI" id="CHEBI:57287"/>
        <dbReference type="ChEBI" id="CHEBI:57288"/>
        <dbReference type="ChEBI" id="CHEBI:456215"/>
        <dbReference type="EC" id="6.2.1.1"/>
    </reaction>
</comment>
<comment type="cofactor">
    <cofactor evidence="1">
        <name>Mg(2+)</name>
        <dbReference type="ChEBI" id="CHEBI:18420"/>
    </cofactor>
</comment>
<comment type="PTM">
    <text evidence="1">Acetylated. Deacetylation by the SIR2-homolog deacetylase activates the enzyme.</text>
</comment>
<comment type="similarity">
    <text evidence="1">Belongs to the ATP-dependent AMP-binding enzyme family.</text>
</comment>
<sequence>MSEKIYPIPDNIKKNALIDEETYQQWYQESINDPESFWAKHGQCIEWFKPYTKVKNTSFNGDVSIQWYEDGITNVAYNCIDRHLKTHGDKIALIWEGDNPYHDKKITYNELYEHVCRFANILKNHGVKKGDKVTIYLTMIPEAAYAMLACARIGAIHSVIFAGFSPEAIAGRIVDCESTFIITANQGLRGGKQINLKDSVDHAIEIAARQNVHVDQVMVIRRTCGPIHWVEGRDFWYHEEVSHTKTDCPAEKMNAEDPLFILYTSGSTGKPKGVLHTTAGYLVYASMTHKYVFDYHAGEIYWCTADIGWITGHSYLVYGPLCNAATTLMFEGTPTFPDNGRFWEIVDKHQVNIFYTAPTAIRALMGAGNSFVERSKRTSLRLLGSVGEPINPEAWEWFYHTVGNNHCPILDTWWQTETGGHMITPLPGATPLKAGSATRPFFGVQLQIIDAEGNVLEGETEGNLCIIDSWPGQMRTLYNDHERFIQTYFSTYKGKYFTGDGCRRDSDGYYWITGRVDDILNVSGHRLGTAEIESALVSHPAVSEAAVVGYPHTIKGQGIYSFITLMEGTAPSEELHQELIRHVRKEIGSIAILDKVQFAPQLPKTRSGKIMRRILRKIAENNFDNLGDISTLSEPQVIDDLIANRQNREITA</sequence>
<dbReference type="EC" id="6.2.1.1" evidence="1"/>
<dbReference type="EMBL" id="BX897699">
    <property type="protein sequence ID" value="CAF28304.1"/>
    <property type="molecule type" value="Genomic_DNA"/>
</dbReference>
<dbReference type="SMR" id="Q6G1W0"/>
<dbReference type="PaxDb" id="283166-BH15410"/>
<dbReference type="EnsemblBacteria" id="CAF28304">
    <property type="protein sequence ID" value="CAF28304"/>
    <property type="gene ID" value="BH15410"/>
</dbReference>
<dbReference type="KEGG" id="bhe:BH15410"/>
<dbReference type="eggNOG" id="COG0365">
    <property type="taxonomic scope" value="Bacteria"/>
</dbReference>
<dbReference type="OrthoDB" id="9803968at2"/>
<dbReference type="Proteomes" id="UP000000421">
    <property type="component" value="Chromosome"/>
</dbReference>
<dbReference type="GO" id="GO:0005829">
    <property type="term" value="C:cytosol"/>
    <property type="evidence" value="ECO:0007669"/>
    <property type="project" value="TreeGrafter"/>
</dbReference>
<dbReference type="GO" id="GO:0003987">
    <property type="term" value="F:acetate-CoA ligase activity"/>
    <property type="evidence" value="ECO:0007669"/>
    <property type="project" value="UniProtKB-UniRule"/>
</dbReference>
<dbReference type="GO" id="GO:0016208">
    <property type="term" value="F:AMP binding"/>
    <property type="evidence" value="ECO:0007669"/>
    <property type="project" value="InterPro"/>
</dbReference>
<dbReference type="GO" id="GO:0005524">
    <property type="term" value="F:ATP binding"/>
    <property type="evidence" value="ECO:0007669"/>
    <property type="project" value="UniProtKB-KW"/>
</dbReference>
<dbReference type="GO" id="GO:0046872">
    <property type="term" value="F:metal ion binding"/>
    <property type="evidence" value="ECO:0007669"/>
    <property type="project" value="UniProtKB-KW"/>
</dbReference>
<dbReference type="GO" id="GO:0019427">
    <property type="term" value="P:acetyl-CoA biosynthetic process from acetate"/>
    <property type="evidence" value="ECO:0007669"/>
    <property type="project" value="InterPro"/>
</dbReference>
<dbReference type="CDD" id="cd05966">
    <property type="entry name" value="ACS"/>
    <property type="match status" value="1"/>
</dbReference>
<dbReference type="FunFam" id="3.30.300.30:FF:000004">
    <property type="entry name" value="Acetyl-coenzyme A synthetase"/>
    <property type="match status" value="1"/>
</dbReference>
<dbReference type="FunFam" id="3.40.50.12780:FF:000001">
    <property type="entry name" value="Acetyl-coenzyme A synthetase"/>
    <property type="match status" value="1"/>
</dbReference>
<dbReference type="Gene3D" id="3.30.300.30">
    <property type="match status" value="1"/>
</dbReference>
<dbReference type="Gene3D" id="3.40.50.12780">
    <property type="entry name" value="N-terminal domain of ligase-like"/>
    <property type="match status" value="1"/>
</dbReference>
<dbReference type="HAMAP" id="MF_01123">
    <property type="entry name" value="Ac_CoA_synth"/>
    <property type="match status" value="1"/>
</dbReference>
<dbReference type="InterPro" id="IPR011904">
    <property type="entry name" value="Ac_CoA_lig"/>
</dbReference>
<dbReference type="InterPro" id="IPR032387">
    <property type="entry name" value="ACAS_N"/>
</dbReference>
<dbReference type="InterPro" id="IPR025110">
    <property type="entry name" value="AMP-bd_C"/>
</dbReference>
<dbReference type="InterPro" id="IPR045851">
    <property type="entry name" value="AMP-bd_C_sf"/>
</dbReference>
<dbReference type="InterPro" id="IPR020845">
    <property type="entry name" value="AMP-binding_CS"/>
</dbReference>
<dbReference type="InterPro" id="IPR000873">
    <property type="entry name" value="AMP-dep_synth/lig_dom"/>
</dbReference>
<dbReference type="InterPro" id="IPR042099">
    <property type="entry name" value="ANL_N_sf"/>
</dbReference>
<dbReference type="NCBIfam" id="TIGR02188">
    <property type="entry name" value="Ac_CoA_lig_AcsA"/>
    <property type="match status" value="1"/>
</dbReference>
<dbReference type="NCBIfam" id="NF001208">
    <property type="entry name" value="PRK00174.1"/>
    <property type="match status" value="1"/>
</dbReference>
<dbReference type="PANTHER" id="PTHR24095">
    <property type="entry name" value="ACETYL-COENZYME A SYNTHETASE"/>
    <property type="match status" value="1"/>
</dbReference>
<dbReference type="PANTHER" id="PTHR24095:SF14">
    <property type="entry name" value="ACETYL-COENZYME A SYNTHETASE 1"/>
    <property type="match status" value="1"/>
</dbReference>
<dbReference type="Pfam" id="PF16177">
    <property type="entry name" value="ACAS_N"/>
    <property type="match status" value="1"/>
</dbReference>
<dbReference type="Pfam" id="PF00501">
    <property type="entry name" value="AMP-binding"/>
    <property type="match status" value="1"/>
</dbReference>
<dbReference type="Pfam" id="PF13193">
    <property type="entry name" value="AMP-binding_C"/>
    <property type="match status" value="1"/>
</dbReference>
<dbReference type="SUPFAM" id="SSF56801">
    <property type="entry name" value="Acetyl-CoA synthetase-like"/>
    <property type="match status" value="1"/>
</dbReference>
<dbReference type="PROSITE" id="PS00455">
    <property type="entry name" value="AMP_BINDING"/>
    <property type="match status" value="1"/>
</dbReference>
<evidence type="ECO:0000255" key="1">
    <source>
        <dbReference type="HAMAP-Rule" id="MF_01123"/>
    </source>
</evidence>